<reference key="1">
    <citation type="journal article" date="1983" name="Nucleic Acids Res.">
        <title>The complete nucleotide sequences of the cloned hepatitis B virus DNA; subtype adr and adw.</title>
        <authorList>
            <person name="Ono Y."/>
            <person name="Onda H."/>
            <person name="Sasada R."/>
            <person name="Igarashi K."/>
            <person name="Sugino Y."/>
            <person name="Nishioka K."/>
        </authorList>
    </citation>
    <scope>NUCLEOTIDE SEQUENCE [GENOMIC DNA]</scope>
</reference>
<name>HBEAG_HBVC1</name>
<protein>
    <recommendedName>
        <fullName evidence="2">External core antigen</fullName>
    </recommendedName>
    <alternativeName>
        <fullName evidence="2">HBeAg</fullName>
    </alternativeName>
    <alternativeName>
        <fullName evidence="2">Precore protein</fullName>
    </alternativeName>
    <alternativeName>
        <fullName evidence="2">p25</fullName>
    </alternativeName>
</protein>
<proteinExistence type="inferred from homology"/>
<organism>
    <name type="scientific">Hepatitis B virus genotype C subtype adr (isolate Japan/Nishioka/1983)</name>
    <name type="common">HBV-C</name>
    <dbReference type="NCBI Taxonomy" id="482133"/>
    <lineage>
        <taxon>Viruses</taxon>
        <taxon>Riboviria</taxon>
        <taxon>Pararnavirae</taxon>
        <taxon>Artverviricota</taxon>
        <taxon>Revtraviricetes</taxon>
        <taxon>Blubervirales</taxon>
        <taxon>Hepadnaviridae</taxon>
        <taxon>Orthohepadnavirus</taxon>
        <taxon>Hepatitis B virus</taxon>
    </lineage>
</organism>
<dbReference type="EMBL" id="D00630">
    <property type="status" value="NOT_ANNOTATED_CDS"/>
    <property type="molecule type" value="Genomic_DNA"/>
</dbReference>
<dbReference type="SMR" id="P0C6H3"/>
<dbReference type="Proteomes" id="UP000007921">
    <property type="component" value="Genome"/>
</dbReference>
<dbReference type="GO" id="GO:0005576">
    <property type="term" value="C:extracellular region"/>
    <property type="evidence" value="ECO:0007669"/>
    <property type="project" value="UniProtKB-SubCell"/>
</dbReference>
<dbReference type="GO" id="GO:0043657">
    <property type="term" value="C:host cell"/>
    <property type="evidence" value="ECO:0007669"/>
    <property type="project" value="GOC"/>
</dbReference>
<dbReference type="GO" id="GO:0030430">
    <property type="term" value="C:host cell cytoplasm"/>
    <property type="evidence" value="ECO:0007669"/>
    <property type="project" value="UniProtKB-UniRule"/>
</dbReference>
<dbReference type="GO" id="GO:0042025">
    <property type="term" value="C:host cell nucleus"/>
    <property type="evidence" value="ECO:0007669"/>
    <property type="project" value="UniProtKB-SubCell"/>
</dbReference>
<dbReference type="GO" id="GO:0039619">
    <property type="term" value="C:T=4 icosahedral viral capsid"/>
    <property type="evidence" value="ECO:0007669"/>
    <property type="project" value="UniProtKB-UniRule"/>
</dbReference>
<dbReference type="GO" id="GO:0003677">
    <property type="term" value="F:DNA binding"/>
    <property type="evidence" value="ECO:0007669"/>
    <property type="project" value="UniProtKB-UniRule"/>
</dbReference>
<dbReference type="GO" id="GO:0003723">
    <property type="term" value="F:RNA binding"/>
    <property type="evidence" value="ECO:0007669"/>
    <property type="project" value="UniProtKB-UniRule"/>
</dbReference>
<dbReference type="GO" id="GO:0005198">
    <property type="term" value="F:structural molecule activity"/>
    <property type="evidence" value="ECO:0007669"/>
    <property type="project" value="UniProtKB-UniRule"/>
</dbReference>
<dbReference type="GO" id="GO:0075521">
    <property type="term" value="P:microtubule-dependent intracellular transport of viral material towards nucleus"/>
    <property type="evidence" value="ECO:0007669"/>
    <property type="project" value="UniProtKB-UniRule"/>
</dbReference>
<dbReference type="GO" id="GO:0046718">
    <property type="term" value="P:symbiont entry into host cell"/>
    <property type="evidence" value="ECO:0007669"/>
    <property type="project" value="UniProtKB-UniRule"/>
</dbReference>
<dbReference type="GO" id="GO:0075732">
    <property type="term" value="P:viral penetration into host nucleus"/>
    <property type="evidence" value="ECO:0007669"/>
    <property type="project" value="UniProtKB-UniRule"/>
</dbReference>
<dbReference type="FunFam" id="1.10.4090.10:FF:000001">
    <property type="entry name" value="Capsid protein"/>
    <property type="match status" value="1"/>
</dbReference>
<dbReference type="Gene3D" id="1.10.4090.10">
    <property type="entry name" value="Viral capsid, core domain supefamily, Hepatitis B virus"/>
    <property type="match status" value="1"/>
</dbReference>
<dbReference type="HAMAP" id="MF_04076">
    <property type="entry name" value="HBV_HBEAG"/>
    <property type="match status" value="1"/>
</dbReference>
<dbReference type="InterPro" id="IPR013195">
    <property type="entry name" value="Hepatitis_B_virus_capsid_N"/>
</dbReference>
<dbReference type="InterPro" id="IPR002006">
    <property type="entry name" value="Hepatitis_core"/>
</dbReference>
<dbReference type="InterPro" id="IPR036459">
    <property type="entry name" value="Viral_capsid_core_dom_sf_HBV"/>
</dbReference>
<dbReference type="Pfam" id="PF08290">
    <property type="entry name" value="Hep_core_N"/>
    <property type="match status" value="1"/>
</dbReference>
<dbReference type="Pfam" id="PF00906">
    <property type="entry name" value="Hepatitis_core"/>
    <property type="match status" value="3"/>
</dbReference>
<dbReference type="SUPFAM" id="SSF47852">
    <property type="entry name" value="Hepatitis B viral capsid (hbcag)"/>
    <property type="match status" value="1"/>
</dbReference>
<evidence type="ECO:0000250" key="1"/>
<evidence type="ECO:0000255" key="2">
    <source>
        <dbReference type="HAMAP-Rule" id="MF_04076"/>
    </source>
</evidence>
<evidence type="ECO:0000256" key="3">
    <source>
        <dbReference type="SAM" id="MobiDB-lite"/>
    </source>
</evidence>
<accession>P0C6H3</accession>
<comment type="function">
    <text evidence="2">May regulate immune response to the intracellular capsid in acting as a T-cell tolerogen, by having an immunoregulatory effect which prevents destruction of infected cells by cytotoxic T-cells. This immune regulation may predispose to chronicity during perinatal infections and prevent severe liver injury during adult infections.</text>
</comment>
<comment type="subunit">
    <text evidence="2">Homodimerizes.</text>
</comment>
<comment type="subcellular location">
    <subcellularLocation>
        <location evidence="2">Secreted</location>
    </subcellularLocation>
    <subcellularLocation>
        <location evidence="2">Host nucleus</location>
    </subcellularLocation>
</comment>
<comment type="alternative products">
    <event type="alternative initiation"/>
    <isoform>
        <id>P0C6H3-1</id>
        <name>External core antigen</name>
        <sequence type="displayed"/>
    </isoform>
    <isoform>
        <id>Q81102-1</id>
        <name>Capsid protein</name>
        <sequence type="external"/>
    </isoform>
</comment>
<comment type="PTM">
    <text evidence="2">Phosphorylated.</text>
</comment>
<comment type="PTM">
    <text evidence="2">Cleaved by host furin.</text>
</comment>
<comment type="similarity">
    <text evidence="2">Belongs to the orthohepadnavirus precore antigen family.</text>
</comment>
<gene>
    <name evidence="2" type="primary">C</name>
</gene>
<keyword id="KW-0024">Alternative initiation</keyword>
<keyword id="KW-1015">Disulfide bond</keyword>
<keyword id="KW-1048">Host nucleus</keyword>
<keyword id="KW-0945">Host-virus interaction</keyword>
<keyword id="KW-1185">Reference proteome</keyword>
<keyword id="KW-0677">Repeat</keyword>
<keyword id="KW-0964">Secreted</keyword>
<keyword id="KW-0732">Signal</keyword>
<keyword id="KW-0899">Viral immunoevasion</keyword>
<feature type="signal peptide" evidence="2">
    <location>
        <begin position="1"/>
        <end position="19"/>
    </location>
</feature>
<feature type="chain" id="PRO_0000324714" description="External core antigen" evidence="2">
    <location>
        <begin position="20"/>
        <end position="212"/>
    </location>
</feature>
<feature type="propeptide" id="PRO_0000324715" evidence="1">
    <location>
        <begin position="184"/>
        <end position="212"/>
    </location>
</feature>
<feature type="repeat" description="1; half-length">
    <location>
        <begin position="184"/>
        <end position="189"/>
    </location>
</feature>
<feature type="repeat" description="2">
    <location>
        <begin position="191"/>
        <end position="197"/>
    </location>
</feature>
<feature type="repeat" description="3">
    <location>
        <begin position="199"/>
        <end position="205"/>
    </location>
</feature>
<feature type="region of interest" description="HBEAG" evidence="2">
    <location>
        <begin position="25"/>
        <end position="27"/>
    </location>
</feature>
<feature type="region of interest" description="Disordered" evidence="3">
    <location>
        <begin position="172"/>
        <end position="212"/>
    </location>
</feature>
<feature type="region of interest" description="3 X 7 AA repeats of S-P-R-R-R-R-S">
    <location>
        <begin position="184"/>
        <end position="205"/>
    </location>
</feature>
<feature type="compositionally biased region" description="Basic residues" evidence="3">
    <location>
        <begin position="178"/>
        <end position="205"/>
    </location>
</feature>
<feature type="site" description="Cleavage; by host" evidence="2">
    <location>
        <begin position="183"/>
        <end position="184"/>
    </location>
</feature>
<feature type="disulfide bond" description="Interchain" evidence="2">
    <location>
        <position position="77"/>
    </location>
</feature>
<feature type="disulfide bond" description="Interchain" evidence="2">
    <location>
        <position position="90"/>
    </location>
</feature>
<sequence length="212" mass="24306">MQLFHLCLIISCSCPTVQASKLCLGWLRGMDIDTYKEFGASVELLSFLPSDFFPSIRDLLDTAFALHREALESPEHCSPHHTALRQAIVCWGELMNLATWVGSNLEDPASRELVVSYVNVNMGLKIRQLLWFHISCLTFGRETVLEYLVSVGVWIRTPQAYRPPNAPILSTLPETTVVRRRGRSPRRRTPSPRRRRSKSPRRRRSQSRESQC</sequence>
<organismHost>
    <name type="scientific">Homo sapiens</name>
    <name type="common">Human</name>
    <dbReference type="NCBI Taxonomy" id="9606"/>
</organismHost>